<comment type="function">
    <text evidence="1">Catalyzes the condensation of carbamoyl phosphate and aspartate to form carbamoyl aspartate and inorganic phosphate, the committed step in the de novo pyrimidine nucleotide biosynthesis pathway.</text>
</comment>
<comment type="catalytic activity">
    <reaction evidence="1">
        <text>carbamoyl phosphate + L-aspartate = N-carbamoyl-L-aspartate + phosphate + H(+)</text>
        <dbReference type="Rhea" id="RHEA:20013"/>
        <dbReference type="ChEBI" id="CHEBI:15378"/>
        <dbReference type="ChEBI" id="CHEBI:29991"/>
        <dbReference type="ChEBI" id="CHEBI:32814"/>
        <dbReference type="ChEBI" id="CHEBI:43474"/>
        <dbReference type="ChEBI" id="CHEBI:58228"/>
        <dbReference type="EC" id="2.1.3.2"/>
    </reaction>
</comment>
<comment type="pathway">
    <text evidence="1">Pyrimidine metabolism; UMP biosynthesis via de novo pathway; (S)-dihydroorotate from bicarbonate: step 2/3.</text>
</comment>
<comment type="subunit">
    <text evidence="1">Heterododecamer (2C3:3R2) of six catalytic PyrB chains organized as two trimers (C3), and six regulatory PyrI chains organized as three dimers (R2).</text>
</comment>
<comment type="similarity">
    <text evidence="1">Belongs to the aspartate/ornithine carbamoyltransferase superfamily. ATCase family.</text>
</comment>
<gene>
    <name evidence="1" type="primary">pyrB</name>
    <name type="ordered locus">NFA_36230</name>
</gene>
<keyword id="KW-0665">Pyrimidine biosynthesis</keyword>
<keyword id="KW-1185">Reference proteome</keyword>
<keyword id="KW-0808">Transferase</keyword>
<organism>
    <name type="scientific">Nocardia farcinica (strain IFM 10152)</name>
    <dbReference type="NCBI Taxonomy" id="247156"/>
    <lineage>
        <taxon>Bacteria</taxon>
        <taxon>Bacillati</taxon>
        <taxon>Actinomycetota</taxon>
        <taxon>Actinomycetes</taxon>
        <taxon>Mycobacteriales</taxon>
        <taxon>Nocardiaceae</taxon>
        <taxon>Nocardia</taxon>
    </lineage>
</organism>
<name>PYRB_NOCFA</name>
<feature type="chain" id="PRO_0000113167" description="Aspartate carbamoyltransferase catalytic subunit">
    <location>
        <begin position="1"/>
        <end position="319"/>
    </location>
</feature>
<feature type="binding site" evidence="1">
    <location>
        <position position="55"/>
    </location>
    <ligand>
        <name>carbamoyl phosphate</name>
        <dbReference type="ChEBI" id="CHEBI:58228"/>
    </ligand>
</feature>
<feature type="binding site" evidence="1">
    <location>
        <position position="56"/>
    </location>
    <ligand>
        <name>carbamoyl phosphate</name>
        <dbReference type="ChEBI" id="CHEBI:58228"/>
    </ligand>
</feature>
<feature type="binding site" evidence="1">
    <location>
        <position position="83"/>
    </location>
    <ligand>
        <name>L-aspartate</name>
        <dbReference type="ChEBI" id="CHEBI:29991"/>
    </ligand>
</feature>
<feature type="binding site" evidence="1">
    <location>
        <position position="105"/>
    </location>
    <ligand>
        <name>carbamoyl phosphate</name>
        <dbReference type="ChEBI" id="CHEBI:58228"/>
    </ligand>
</feature>
<feature type="binding site" evidence="1">
    <location>
        <position position="144"/>
    </location>
    <ligand>
        <name>carbamoyl phosphate</name>
        <dbReference type="ChEBI" id="CHEBI:58228"/>
    </ligand>
</feature>
<feature type="binding site" evidence="1">
    <location>
        <position position="147"/>
    </location>
    <ligand>
        <name>carbamoyl phosphate</name>
        <dbReference type="ChEBI" id="CHEBI:58228"/>
    </ligand>
</feature>
<feature type="binding site" evidence="1">
    <location>
        <position position="177"/>
    </location>
    <ligand>
        <name>L-aspartate</name>
        <dbReference type="ChEBI" id="CHEBI:29991"/>
    </ligand>
</feature>
<feature type="binding site" evidence="1">
    <location>
        <position position="231"/>
    </location>
    <ligand>
        <name>L-aspartate</name>
        <dbReference type="ChEBI" id="CHEBI:29991"/>
    </ligand>
</feature>
<feature type="binding site" evidence="1">
    <location>
        <position position="272"/>
    </location>
    <ligand>
        <name>carbamoyl phosphate</name>
        <dbReference type="ChEBI" id="CHEBI:58228"/>
    </ligand>
</feature>
<feature type="binding site" evidence="1">
    <location>
        <position position="273"/>
    </location>
    <ligand>
        <name>carbamoyl phosphate</name>
        <dbReference type="ChEBI" id="CHEBI:58228"/>
    </ligand>
</feature>
<proteinExistence type="inferred from homology"/>
<sequence length="319" mass="34556">MRHLLSVTDLDRTAATELLDEAERFEQALLGREVHKLPTLRGRTVMTVFYENSTRTRVSFEVAGKWMSADVINVSASSSSVSKGESLRDTALTLHAAGADALIVRHPASGAAHQIARWMDGWARESGRSHGPAIVNAGDGMHEHPTQALLDALTLRQRLGDIEGKRVVIVGDILHSRVARSNVFLLHTLGAEVVLVAPRTLLPVGVQSWPARVSHHLDAELPGADAVLMLRVQAERMNGGFFPSAREYSVNYGLSERRLALLAEHAVVMHPGPMLRGMEIASAVADSPQAAVLQQVTNGVHLRMAVLFRLLVGAQEAIA</sequence>
<accession>Q5YTM0</accession>
<protein>
    <recommendedName>
        <fullName evidence="1">Aspartate carbamoyltransferase catalytic subunit</fullName>
        <ecNumber evidence="1">2.1.3.2</ecNumber>
    </recommendedName>
    <alternativeName>
        <fullName evidence="1">Aspartate transcarbamylase</fullName>
        <shortName evidence="1">ATCase</shortName>
    </alternativeName>
</protein>
<evidence type="ECO:0000255" key="1">
    <source>
        <dbReference type="HAMAP-Rule" id="MF_00001"/>
    </source>
</evidence>
<dbReference type="EC" id="2.1.3.2" evidence="1"/>
<dbReference type="EMBL" id="AP006618">
    <property type="protein sequence ID" value="BAD58471.1"/>
    <property type="molecule type" value="Genomic_DNA"/>
</dbReference>
<dbReference type="RefSeq" id="WP_011210156.1">
    <property type="nucleotide sequence ID" value="NC_006361.1"/>
</dbReference>
<dbReference type="SMR" id="Q5YTM0"/>
<dbReference type="STRING" id="247156.NFA_36230"/>
<dbReference type="GeneID" id="61134319"/>
<dbReference type="KEGG" id="nfa:NFA_36230"/>
<dbReference type="eggNOG" id="COG0540">
    <property type="taxonomic scope" value="Bacteria"/>
</dbReference>
<dbReference type="HOGENOM" id="CLU_043846_2_0_11"/>
<dbReference type="OrthoDB" id="9774690at2"/>
<dbReference type="UniPathway" id="UPA00070">
    <property type="reaction ID" value="UER00116"/>
</dbReference>
<dbReference type="Proteomes" id="UP000006820">
    <property type="component" value="Chromosome"/>
</dbReference>
<dbReference type="GO" id="GO:0005829">
    <property type="term" value="C:cytosol"/>
    <property type="evidence" value="ECO:0007669"/>
    <property type="project" value="TreeGrafter"/>
</dbReference>
<dbReference type="GO" id="GO:0016597">
    <property type="term" value="F:amino acid binding"/>
    <property type="evidence" value="ECO:0007669"/>
    <property type="project" value="InterPro"/>
</dbReference>
<dbReference type="GO" id="GO:0004070">
    <property type="term" value="F:aspartate carbamoyltransferase activity"/>
    <property type="evidence" value="ECO:0007669"/>
    <property type="project" value="UniProtKB-UniRule"/>
</dbReference>
<dbReference type="GO" id="GO:0006207">
    <property type="term" value="P:'de novo' pyrimidine nucleobase biosynthetic process"/>
    <property type="evidence" value="ECO:0007669"/>
    <property type="project" value="InterPro"/>
</dbReference>
<dbReference type="GO" id="GO:0044205">
    <property type="term" value="P:'de novo' UMP biosynthetic process"/>
    <property type="evidence" value="ECO:0007669"/>
    <property type="project" value="UniProtKB-UniRule"/>
</dbReference>
<dbReference type="GO" id="GO:0006520">
    <property type="term" value="P:amino acid metabolic process"/>
    <property type="evidence" value="ECO:0007669"/>
    <property type="project" value="InterPro"/>
</dbReference>
<dbReference type="FunFam" id="3.40.50.1370:FF:000007">
    <property type="entry name" value="Aspartate carbamoyltransferase"/>
    <property type="match status" value="1"/>
</dbReference>
<dbReference type="Gene3D" id="3.40.50.1370">
    <property type="entry name" value="Aspartate/ornithine carbamoyltransferase"/>
    <property type="match status" value="2"/>
</dbReference>
<dbReference type="HAMAP" id="MF_00001">
    <property type="entry name" value="Asp_carb_tr"/>
    <property type="match status" value="1"/>
</dbReference>
<dbReference type="InterPro" id="IPR006132">
    <property type="entry name" value="Asp/Orn_carbamoyltranf_P-bd"/>
</dbReference>
<dbReference type="InterPro" id="IPR006130">
    <property type="entry name" value="Asp/Orn_carbamoylTrfase"/>
</dbReference>
<dbReference type="InterPro" id="IPR036901">
    <property type="entry name" value="Asp/Orn_carbamoylTrfase_sf"/>
</dbReference>
<dbReference type="InterPro" id="IPR002082">
    <property type="entry name" value="Asp_carbamoyltransf"/>
</dbReference>
<dbReference type="InterPro" id="IPR006131">
    <property type="entry name" value="Asp_carbamoyltransf_Asp/Orn-bd"/>
</dbReference>
<dbReference type="NCBIfam" id="TIGR00670">
    <property type="entry name" value="asp_carb_tr"/>
    <property type="match status" value="1"/>
</dbReference>
<dbReference type="NCBIfam" id="NF002032">
    <property type="entry name" value="PRK00856.1"/>
    <property type="match status" value="1"/>
</dbReference>
<dbReference type="PANTHER" id="PTHR45753:SF6">
    <property type="entry name" value="ASPARTATE CARBAMOYLTRANSFERASE"/>
    <property type="match status" value="1"/>
</dbReference>
<dbReference type="PANTHER" id="PTHR45753">
    <property type="entry name" value="ORNITHINE CARBAMOYLTRANSFERASE, MITOCHONDRIAL"/>
    <property type="match status" value="1"/>
</dbReference>
<dbReference type="Pfam" id="PF00185">
    <property type="entry name" value="OTCace"/>
    <property type="match status" value="1"/>
</dbReference>
<dbReference type="Pfam" id="PF02729">
    <property type="entry name" value="OTCace_N"/>
    <property type="match status" value="1"/>
</dbReference>
<dbReference type="PRINTS" id="PR00100">
    <property type="entry name" value="AOTCASE"/>
</dbReference>
<dbReference type="PRINTS" id="PR00101">
    <property type="entry name" value="ATCASE"/>
</dbReference>
<dbReference type="SUPFAM" id="SSF53671">
    <property type="entry name" value="Aspartate/ornithine carbamoyltransferase"/>
    <property type="match status" value="1"/>
</dbReference>
<dbReference type="PROSITE" id="PS00097">
    <property type="entry name" value="CARBAMOYLTRANSFERASE"/>
    <property type="match status" value="1"/>
</dbReference>
<reference key="1">
    <citation type="journal article" date="2004" name="Proc. Natl. Acad. Sci. U.S.A.">
        <title>The complete genomic sequence of Nocardia farcinica IFM 10152.</title>
        <authorList>
            <person name="Ishikawa J."/>
            <person name="Yamashita A."/>
            <person name="Mikami Y."/>
            <person name="Hoshino Y."/>
            <person name="Kurita H."/>
            <person name="Hotta K."/>
            <person name="Shiba T."/>
            <person name="Hattori M."/>
        </authorList>
    </citation>
    <scope>NUCLEOTIDE SEQUENCE [LARGE SCALE GENOMIC DNA]</scope>
    <source>
        <strain>IFM 10152</strain>
    </source>
</reference>